<reference key="1">
    <citation type="journal article" date="2008" name="DNA Res.">
        <title>The whole-genome sequencing of the obligate intracellular bacterium Orientia tsutsugamushi revealed massive gene amplification during reductive genome evolution.</title>
        <authorList>
            <person name="Nakayama K."/>
            <person name="Yamashita A."/>
            <person name="Kurokawa K."/>
            <person name="Morimoto T."/>
            <person name="Ogawa M."/>
            <person name="Fukuhara M."/>
            <person name="Urakami H."/>
            <person name="Ohnishi M."/>
            <person name="Uchiyama I."/>
            <person name="Ogura Y."/>
            <person name="Ooka T."/>
            <person name="Oshima K."/>
            <person name="Tamura A."/>
            <person name="Hattori M."/>
            <person name="Hayashi T."/>
        </authorList>
    </citation>
    <scope>NUCLEOTIDE SEQUENCE [LARGE SCALE GENOMIC DNA]</scope>
    <source>
        <strain>Ikeda</strain>
    </source>
</reference>
<dbReference type="EMBL" id="AP008981">
    <property type="protein sequence ID" value="BAG41245.1"/>
    <property type="molecule type" value="Genomic_DNA"/>
</dbReference>
<dbReference type="RefSeq" id="WP_012462203.1">
    <property type="nucleotide sequence ID" value="NC_010793.1"/>
</dbReference>
<dbReference type="SMR" id="B3CV48"/>
<dbReference type="KEGG" id="ott:OTT_1787"/>
<dbReference type="HOGENOM" id="CLU_064548_4_2_5"/>
<dbReference type="OrthoDB" id="9805609at2"/>
<dbReference type="Proteomes" id="UP000001033">
    <property type="component" value="Chromosome"/>
</dbReference>
<dbReference type="GO" id="GO:0022625">
    <property type="term" value="C:cytosolic large ribosomal subunit"/>
    <property type="evidence" value="ECO:0007669"/>
    <property type="project" value="TreeGrafter"/>
</dbReference>
<dbReference type="GO" id="GO:0003735">
    <property type="term" value="F:structural constituent of ribosome"/>
    <property type="evidence" value="ECO:0007669"/>
    <property type="project" value="InterPro"/>
</dbReference>
<dbReference type="GO" id="GO:0006412">
    <property type="term" value="P:translation"/>
    <property type="evidence" value="ECO:0007669"/>
    <property type="project" value="UniProtKB-UniRule"/>
</dbReference>
<dbReference type="Gene3D" id="2.30.170.40">
    <property type="entry name" value="Ribosomal protein L28/L24"/>
    <property type="match status" value="1"/>
</dbReference>
<dbReference type="HAMAP" id="MF_00373">
    <property type="entry name" value="Ribosomal_bL28"/>
    <property type="match status" value="1"/>
</dbReference>
<dbReference type="InterPro" id="IPR026569">
    <property type="entry name" value="Ribosomal_bL28"/>
</dbReference>
<dbReference type="InterPro" id="IPR034704">
    <property type="entry name" value="Ribosomal_bL28/bL31-like_sf"/>
</dbReference>
<dbReference type="InterPro" id="IPR001383">
    <property type="entry name" value="Ribosomal_bL28_bact-type"/>
</dbReference>
<dbReference type="InterPro" id="IPR037147">
    <property type="entry name" value="Ribosomal_bL28_sf"/>
</dbReference>
<dbReference type="NCBIfam" id="TIGR00009">
    <property type="entry name" value="L28"/>
    <property type="match status" value="1"/>
</dbReference>
<dbReference type="PANTHER" id="PTHR13528">
    <property type="entry name" value="39S RIBOSOMAL PROTEIN L28, MITOCHONDRIAL"/>
    <property type="match status" value="1"/>
</dbReference>
<dbReference type="PANTHER" id="PTHR13528:SF2">
    <property type="entry name" value="LARGE RIBOSOMAL SUBUNIT PROTEIN BL28M"/>
    <property type="match status" value="1"/>
</dbReference>
<dbReference type="Pfam" id="PF00830">
    <property type="entry name" value="Ribosomal_L28"/>
    <property type="match status" value="1"/>
</dbReference>
<dbReference type="SUPFAM" id="SSF143800">
    <property type="entry name" value="L28p-like"/>
    <property type="match status" value="1"/>
</dbReference>
<feature type="chain" id="PRO_1000121665" description="Large ribosomal subunit protein bL28">
    <location>
        <begin position="1"/>
        <end position="95"/>
    </location>
</feature>
<name>RL28_ORITI</name>
<evidence type="ECO:0000255" key="1">
    <source>
        <dbReference type="HAMAP-Rule" id="MF_00373"/>
    </source>
</evidence>
<evidence type="ECO:0000305" key="2"/>
<sequence length="95" mass="10558">MSRVCELTGVSVQSGHNVSHSQRKTKRKFLPNLQNVSLFSDSLKKAFKFKVVARAMRTLDKVGGLDCYLLSASDKTLSKSAIEVKKIIKNNESKS</sequence>
<keyword id="KW-0687">Ribonucleoprotein</keyword>
<keyword id="KW-0689">Ribosomal protein</keyword>
<accession>B3CV48</accession>
<comment type="similarity">
    <text evidence="1">Belongs to the bacterial ribosomal protein bL28 family.</text>
</comment>
<organism>
    <name type="scientific">Orientia tsutsugamushi (strain Ikeda)</name>
    <name type="common">Rickettsia tsutsugamushi</name>
    <dbReference type="NCBI Taxonomy" id="334380"/>
    <lineage>
        <taxon>Bacteria</taxon>
        <taxon>Pseudomonadati</taxon>
        <taxon>Pseudomonadota</taxon>
        <taxon>Alphaproteobacteria</taxon>
        <taxon>Rickettsiales</taxon>
        <taxon>Rickettsiaceae</taxon>
        <taxon>Rickettsieae</taxon>
        <taxon>Orientia</taxon>
    </lineage>
</organism>
<gene>
    <name evidence="1" type="primary">rpmB</name>
    <name type="ordered locus">OTT_1787</name>
</gene>
<protein>
    <recommendedName>
        <fullName evidence="1">Large ribosomal subunit protein bL28</fullName>
    </recommendedName>
    <alternativeName>
        <fullName evidence="2">50S ribosomal protein L28</fullName>
    </alternativeName>
</protein>
<proteinExistence type="inferred from homology"/>